<feature type="chain" id="PRO_1000007207" description="Large ribosomal subunit protein bL28">
    <location>
        <begin position="1"/>
        <end position="72"/>
    </location>
</feature>
<gene>
    <name evidence="1" type="primary">rpmB</name>
    <name type="ordered locus">Cpha266_0582</name>
</gene>
<dbReference type="EMBL" id="CP000492">
    <property type="protein sequence ID" value="ABL64638.1"/>
    <property type="molecule type" value="Genomic_DNA"/>
</dbReference>
<dbReference type="RefSeq" id="WP_011744471.1">
    <property type="nucleotide sequence ID" value="NC_008639.1"/>
</dbReference>
<dbReference type="SMR" id="A1BE11"/>
<dbReference type="STRING" id="290317.Cpha266_0582"/>
<dbReference type="KEGG" id="cph:Cpha266_0582"/>
<dbReference type="eggNOG" id="COG0227">
    <property type="taxonomic scope" value="Bacteria"/>
</dbReference>
<dbReference type="HOGENOM" id="CLU_064548_3_1_10"/>
<dbReference type="OrthoDB" id="9805609at2"/>
<dbReference type="Proteomes" id="UP000008701">
    <property type="component" value="Chromosome"/>
</dbReference>
<dbReference type="GO" id="GO:1990904">
    <property type="term" value="C:ribonucleoprotein complex"/>
    <property type="evidence" value="ECO:0007669"/>
    <property type="project" value="UniProtKB-KW"/>
</dbReference>
<dbReference type="GO" id="GO:0005840">
    <property type="term" value="C:ribosome"/>
    <property type="evidence" value="ECO:0007669"/>
    <property type="project" value="UniProtKB-KW"/>
</dbReference>
<dbReference type="GO" id="GO:0003735">
    <property type="term" value="F:structural constituent of ribosome"/>
    <property type="evidence" value="ECO:0007669"/>
    <property type="project" value="InterPro"/>
</dbReference>
<dbReference type="GO" id="GO:0006412">
    <property type="term" value="P:translation"/>
    <property type="evidence" value="ECO:0007669"/>
    <property type="project" value="UniProtKB-UniRule"/>
</dbReference>
<dbReference type="FunFam" id="2.30.170.40:FF:000001">
    <property type="entry name" value="50S ribosomal protein L28"/>
    <property type="match status" value="1"/>
</dbReference>
<dbReference type="Gene3D" id="2.30.170.40">
    <property type="entry name" value="Ribosomal protein L28/L24"/>
    <property type="match status" value="1"/>
</dbReference>
<dbReference type="HAMAP" id="MF_00373">
    <property type="entry name" value="Ribosomal_bL28"/>
    <property type="match status" value="1"/>
</dbReference>
<dbReference type="InterPro" id="IPR026569">
    <property type="entry name" value="Ribosomal_bL28"/>
</dbReference>
<dbReference type="InterPro" id="IPR034704">
    <property type="entry name" value="Ribosomal_bL28/bL31-like_sf"/>
</dbReference>
<dbReference type="InterPro" id="IPR001383">
    <property type="entry name" value="Ribosomal_bL28_bact-type"/>
</dbReference>
<dbReference type="InterPro" id="IPR037147">
    <property type="entry name" value="Ribosomal_bL28_sf"/>
</dbReference>
<dbReference type="NCBIfam" id="TIGR00009">
    <property type="entry name" value="L28"/>
    <property type="match status" value="1"/>
</dbReference>
<dbReference type="PANTHER" id="PTHR13528">
    <property type="entry name" value="39S RIBOSOMAL PROTEIN L28, MITOCHONDRIAL"/>
    <property type="match status" value="1"/>
</dbReference>
<dbReference type="PANTHER" id="PTHR13528:SF2">
    <property type="entry name" value="LARGE RIBOSOMAL SUBUNIT PROTEIN BL28M"/>
    <property type="match status" value="1"/>
</dbReference>
<dbReference type="Pfam" id="PF00830">
    <property type="entry name" value="Ribosomal_L28"/>
    <property type="match status" value="1"/>
</dbReference>
<dbReference type="SUPFAM" id="SSF143800">
    <property type="entry name" value="L28p-like"/>
    <property type="match status" value="1"/>
</dbReference>
<keyword id="KW-1185">Reference proteome</keyword>
<keyword id="KW-0687">Ribonucleoprotein</keyword>
<keyword id="KW-0689">Ribosomal protein</keyword>
<protein>
    <recommendedName>
        <fullName evidence="1">Large ribosomal subunit protein bL28</fullName>
    </recommendedName>
    <alternativeName>
        <fullName evidence="2">50S ribosomal protein L28</fullName>
    </alternativeName>
</protein>
<sequence>MSKVCVLTGKRPKYGNTVSHANNHVRTRFEPNLHTKKIWIEEEKRFVKVKLSAKAMKIIAKTGTAQLAKLLK</sequence>
<evidence type="ECO:0000255" key="1">
    <source>
        <dbReference type="HAMAP-Rule" id="MF_00373"/>
    </source>
</evidence>
<evidence type="ECO:0000305" key="2"/>
<reference key="1">
    <citation type="submission" date="2006-12" db="EMBL/GenBank/DDBJ databases">
        <title>Complete sequence of Chlorobium phaeobacteroides DSM 266.</title>
        <authorList>
            <consortium name="US DOE Joint Genome Institute"/>
            <person name="Copeland A."/>
            <person name="Lucas S."/>
            <person name="Lapidus A."/>
            <person name="Barry K."/>
            <person name="Detter J.C."/>
            <person name="Glavina del Rio T."/>
            <person name="Hammon N."/>
            <person name="Israni S."/>
            <person name="Pitluck S."/>
            <person name="Goltsman E."/>
            <person name="Schmutz J."/>
            <person name="Larimer F."/>
            <person name="Land M."/>
            <person name="Hauser L."/>
            <person name="Mikhailova N."/>
            <person name="Li T."/>
            <person name="Overmann J."/>
            <person name="Bryant D.A."/>
            <person name="Richardson P."/>
        </authorList>
    </citation>
    <scope>NUCLEOTIDE SEQUENCE [LARGE SCALE GENOMIC DNA]</scope>
    <source>
        <strain>DSM 266 / SMG 266 / 2430</strain>
    </source>
</reference>
<comment type="similarity">
    <text evidence="1">Belongs to the bacterial ribosomal protein bL28 family.</text>
</comment>
<accession>A1BE11</accession>
<proteinExistence type="inferred from homology"/>
<organism>
    <name type="scientific">Chlorobium phaeobacteroides (strain DSM 266 / SMG 266 / 2430)</name>
    <dbReference type="NCBI Taxonomy" id="290317"/>
    <lineage>
        <taxon>Bacteria</taxon>
        <taxon>Pseudomonadati</taxon>
        <taxon>Chlorobiota</taxon>
        <taxon>Chlorobiia</taxon>
        <taxon>Chlorobiales</taxon>
        <taxon>Chlorobiaceae</taxon>
        <taxon>Chlorobium/Pelodictyon group</taxon>
        <taxon>Chlorobium</taxon>
    </lineage>
</organism>
<name>RL28_CHLPD</name>